<gene>
    <name evidence="1" type="primary">prfC</name>
    <name type="ordered locus">ECSE_4649</name>
</gene>
<evidence type="ECO:0000255" key="1">
    <source>
        <dbReference type="HAMAP-Rule" id="MF_00072"/>
    </source>
</evidence>
<accession>B6I2Q6</accession>
<proteinExistence type="inferred from homology"/>
<sequence>MTLSPYLQEVAKRRTFAIISHPDAGKTTITEKVLLFGQAIQTAGTVKGRGSNQHAKSDWMEMEKQRGISITTSVMQFPYHDCLVNLLDTPGHEDFSEDTYRTLTAVDCCLMVIDAAKGVEDRTRKLMEVTRLRDTPILTFMNKLDRDIRDPMELLDEVENELKIGCAPITWPIGCGKLFKGVYHLYKDETYLYQSGKGHTIQEVRIVKGLNNPDLDAAVGEDLAQQLRDELELVKGASNEFDKELFLAGEITPVFFGTALGNFGVDHMLDGLVEWAPAPMPRQTDTRTVEASEDKFTGFVFKIQANMDPKHRDRVAFMRVVSGKYEKGMKLRQVRTAKDVVISDALTFMAGDRSHVEEAYPGDILGLHNHGTIQIGDTFTQGEMMKFTGIPNFAPELFRRIRLKDPLKQKQLLKGLVQLSEEGAVQVFRPISNNDLIVGAVGVLQFDVVVSRLKSEYNVEAVYESVNVATARWVECADAKKFEEFKRKNESQLALDGGDNLAYIATSMVNLRLAQERYPDVQFHQTREH</sequence>
<name>RF3_ECOSE</name>
<keyword id="KW-0963">Cytoplasm</keyword>
<keyword id="KW-0342">GTP-binding</keyword>
<keyword id="KW-0547">Nucleotide-binding</keyword>
<keyword id="KW-0648">Protein biosynthesis</keyword>
<organism>
    <name type="scientific">Escherichia coli (strain SE11)</name>
    <dbReference type="NCBI Taxonomy" id="409438"/>
    <lineage>
        <taxon>Bacteria</taxon>
        <taxon>Pseudomonadati</taxon>
        <taxon>Pseudomonadota</taxon>
        <taxon>Gammaproteobacteria</taxon>
        <taxon>Enterobacterales</taxon>
        <taxon>Enterobacteriaceae</taxon>
        <taxon>Escherichia</taxon>
    </lineage>
</organism>
<reference key="1">
    <citation type="journal article" date="2008" name="DNA Res.">
        <title>Complete genome sequence and comparative analysis of the wild-type commensal Escherichia coli strain SE11 isolated from a healthy adult.</title>
        <authorList>
            <person name="Oshima K."/>
            <person name="Toh H."/>
            <person name="Ogura Y."/>
            <person name="Sasamoto H."/>
            <person name="Morita H."/>
            <person name="Park S.-H."/>
            <person name="Ooka T."/>
            <person name="Iyoda S."/>
            <person name="Taylor T.D."/>
            <person name="Hayashi T."/>
            <person name="Itoh K."/>
            <person name="Hattori M."/>
        </authorList>
    </citation>
    <scope>NUCLEOTIDE SEQUENCE [LARGE SCALE GENOMIC DNA]</scope>
    <source>
        <strain>SE11</strain>
    </source>
</reference>
<comment type="function">
    <text evidence="1">Increases the formation of ribosomal termination complexes and stimulates activities of RF-1 and RF-2. It binds guanine nucleotides and has strong preference for UGA stop codons. It may interact directly with the ribosome. The stimulation of RF-1 and RF-2 is significantly reduced by GTP and GDP, but not by GMP.</text>
</comment>
<comment type="subcellular location">
    <subcellularLocation>
        <location evidence="1">Cytoplasm</location>
    </subcellularLocation>
</comment>
<comment type="similarity">
    <text evidence="1">Belongs to the TRAFAC class translation factor GTPase superfamily. Classic translation factor GTPase family. PrfC subfamily.</text>
</comment>
<dbReference type="EMBL" id="AP009240">
    <property type="protein sequence ID" value="BAG80173.1"/>
    <property type="molecule type" value="Genomic_DNA"/>
</dbReference>
<dbReference type="RefSeq" id="WP_000175943.1">
    <property type="nucleotide sequence ID" value="NC_011415.1"/>
</dbReference>
<dbReference type="SMR" id="B6I2Q6"/>
<dbReference type="GeneID" id="75169869"/>
<dbReference type="KEGG" id="ecy:ECSE_4649"/>
<dbReference type="HOGENOM" id="CLU_002794_2_1_6"/>
<dbReference type="Proteomes" id="UP000008199">
    <property type="component" value="Chromosome"/>
</dbReference>
<dbReference type="GO" id="GO:0005829">
    <property type="term" value="C:cytosol"/>
    <property type="evidence" value="ECO:0007669"/>
    <property type="project" value="TreeGrafter"/>
</dbReference>
<dbReference type="GO" id="GO:0005525">
    <property type="term" value="F:GTP binding"/>
    <property type="evidence" value="ECO:0007669"/>
    <property type="project" value="UniProtKB-UniRule"/>
</dbReference>
<dbReference type="GO" id="GO:0003924">
    <property type="term" value="F:GTPase activity"/>
    <property type="evidence" value="ECO:0007669"/>
    <property type="project" value="InterPro"/>
</dbReference>
<dbReference type="GO" id="GO:0097216">
    <property type="term" value="F:guanosine tetraphosphate binding"/>
    <property type="evidence" value="ECO:0007669"/>
    <property type="project" value="UniProtKB-ARBA"/>
</dbReference>
<dbReference type="GO" id="GO:0016150">
    <property type="term" value="F:translation release factor activity, codon nonspecific"/>
    <property type="evidence" value="ECO:0007669"/>
    <property type="project" value="TreeGrafter"/>
</dbReference>
<dbReference type="GO" id="GO:0016149">
    <property type="term" value="F:translation release factor activity, codon specific"/>
    <property type="evidence" value="ECO:0007669"/>
    <property type="project" value="UniProtKB-UniRule"/>
</dbReference>
<dbReference type="GO" id="GO:0006449">
    <property type="term" value="P:regulation of translational termination"/>
    <property type="evidence" value="ECO:0007669"/>
    <property type="project" value="UniProtKB-UniRule"/>
</dbReference>
<dbReference type="CDD" id="cd04169">
    <property type="entry name" value="RF3"/>
    <property type="match status" value="1"/>
</dbReference>
<dbReference type="CDD" id="cd03689">
    <property type="entry name" value="RF3_II"/>
    <property type="match status" value="1"/>
</dbReference>
<dbReference type="CDD" id="cd16259">
    <property type="entry name" value="RF3_III"/>
    <property type="match status" value="1"/>
</dbReference>
<dbReference type="FunFam" id="2.40.30.10:FF:000040">
    <property type="entry name" value="Peptide chain release factor 3"/>
    <property type="match status" value="1"/>
</dbReference>
<dbReference type="FunFam" id="3.30.70.3280:FF:000001">
    <property type="entry name" value="Peptide chain release factor 3"/>
    <property type="match status" value="1"/>
</dbReference>
<dbReference type="FunFam" id="3.40.50.300:FF:000184">
    <property type="entry name" value="Peptide chain release factor 3"/>
    <property type="match status" value="1"/>
</dbReference>
<dbReference type="FunFam" id="3.40.50.300:FF:000253">
    <property type="entry name" value="Peptide chain release factor 3"/>
    <property type="match status" value="1"/>
</dbReference>
<dbReference type="Gene3D" id="3.40.50.300">
    <property type="entry name" value="P-loop containing nucleotide triphosphate hydrolases"/>
    <property type="match status" value="3"/>
</dbReference>
<dbReference type="Gene3D" id="3.30.70.3280">
    <property type="entry name" value="Peptide chain release factor 3, domain III"/>
    <property type="match status" value="1"/>
</dbReference>
<dbReference type="HAMAP" id="MF_00072">
    <property type="entry name" value="Rel_fac_3"/>
    <property type="match status" value="1"/>
</dbReference>
<dbReference type="InterPro" id="IPR053905">
    <property type="entry name" value="EF-G-like_DII"/>
</dbReference>
<dbReference type="InterPro" id="IPR035647">
    <property type="entry name" value="EFG_III/V"/>
</dbReference>
<dbReference type="InterPro" id="IPR031157">
    <property type="entry name" value="G_TR_CS"/>
</dbReference>
<dbReference type="InterPro" id="IPR027417">
    <property type="entry name" value="P-loop_NTPase"/>
</dbReference>
<dbReference type="InterPro" id="IPR004548">
    <property type="entry name" value="PrfC"/>
</dbReference>
<dbReference type="InterPro" id="IPR032090">
    <property type="entry name" value="RF3_C"/>
</dbReference>
<dbReference type="InterPro" id="IPR038467">
    <property type="entry name" value="RF3_dom_3_sf"/>
</dbReference>
<dbReference type="InterPro" id="IPR041732">
    <property type="entry name" value="RF3_GTP-bd"/>
</dbReference>
<dbReference type="InterPro" id="IPR005225">
    <property type="entry name" value="Small_GTP-bd"/>
</dbReference>
<dbReference type="InterPro" id="IPR000795">
    <property type="entry name" value="T_Tr_GTP-bd_dom"/>
</dbReference>
<dbReference type="InterPro" id="IPR009000">
    <property type="entry name" value="Transl_B-barrel_sf"/>
</dbReference>
<dbReference type="NCBIfam" id="TIGR00503">
    <property type="entry name" value="prfC"/>
    <property type="match status" value="1"/>
</dbReference>
<dbReference type="NCBIfam" id="NF001964">
    <property type="entry name" value="PRK00741.1"/>
    <property type="match status" value="1"/>
</dbReference>
<dbReference type="NCBIfam" id="TIGR00231">
    <property type="entry name" value="small_GTP"/>
    <property type="match status" value="1"/>
</dbReference>
<dbReference type="PANTHER" id="PTHR43556">
    <property type="entry name" value="PEPTIDE CHAIN RELEASE FACTOR RF3"/>
    <property type="match status" value="1"/>
</dbReference>
<dbReference type="PANTHER" id="PTHR43556:SF2">
    <property type="entry name" value="PEPTIDE CHAIN RELEASE FACTOR RF3"/>
    <property type="match status" value="1"/>
</dbReference>
<dbReference type="Pfam" id="PF22042">
    <property type="entry name" value="EF-G_D2"/>
    <property type="match status" value="1"/>
</dbReference>
<dbReference type="Pfam" id="PF00009">
    <property type="entry name" value="GTP_EFTU"/>
    <property type="match status" value="1"/>
</dbReference>
<dbReference type="Pfam" id="PF16658">
    <property type="entry name" value="RF3_C"/>
    <property type="match status" value="1"/>
</dbReference>
<dbReference type="PRINTS" id="PR00315">
    <property type="entry name" value="ELONGATNFCT"/>
</dbReference>
<dbReference type="SUPFAM" id="SSF54980">
    <property type="entry name" value="EF-G C-terminal domain-like"/>
    <property type="match status" value="1"/>
</dbReference>
<dbReference type="SUPFAM" id="SSF52540">
    <property type="entry name" value="P-loop containing nucleoside triphosphate hydrolases"/>
    <property type="match status" value="1"/>
</dbReference>
<dbReference type="SUPFAM" id="SSF50447">
    <property type="entry name" value="Translation proteins"/>
    <property type="match status" value="1"/>
</dbReference>
<dbReference type="PROSITE" id="PS00301">
    <property type="entry name" value="G_TR_1"/>
    <property type="match status" value="1"/>
</dbReference>
<dbReference type="PROSITE" id="PS51722">
    <property type="entry name" value="G_TR_2"/>
    <property type="match status" value="1"/>
</dbReference>
<feature type="chain" id="PRO_1000092483" description="Peptide chain release factor 3">
    <location>
        <begin position="1"/>
        <end position="529"/>
    </location>
</feature>
<feature type="domain" description="tr-type G">
    <location>
        <begin position="11"/>
        <end position="280"/>
    </location>
</feature>
<feature type="binding site" evidence="1">
    <location>
        <begin position="20"/>
        <end position="27"/>
    </location>
    <ligand>
        <name>GTP</name>
        <dbReference type="ChEBI" id="CHEBI:37565"/>
    </ligand>
</feature>
<feature type="binding site" evidence="1">
    <location>
        <begin position="88"/>
        <end position="92"/>
    </location>
    <ligand>
        <name>GTP</name>
        <dbReference type="ChEBI" id="CHEBI:37565"/>
    </ligand>
</feature>
<feature type="binding site" evidence="1">
    <location>
        <begin position="142"/>
        <end position="145"/>
    </location>
    <ligand>
        <name>GTP</name>
        <dbReference type="ChEBI" id="CHEBI:37565"/>
    </ligand>
</feature>
<protein>
    <recommendedName>
        <fullName evidence="1">Peptide chain release factor 3</fullName>
        <shortName evidence="1">RF-3</shortName>
    </recommendedName>
</protein>